<organism>
    <name type="scientific">Desulfosudis oleivorans (strain DSM 6200 / JCM 39069 / Hxd3)</name>
    <name type="common">Desulfococcus oleovorans</name>
    <dbReference type="NCBI Taxonomy" id="96561"/>
    <lineage>
        <taxon>Bacteria</taxon>
        <taxon>Pseudomonadati</taxon>
        <taxon>Thermodesulfobacteriota</taxon>
        <taxon>Desulfobacteria</taxon>
        <taxon>Desulfobacterales</taxon>
        <taxon>Desulfosudaceae</taxon>
        <taxon>Desulfosudis</taxon>
    </lineage>
</organism>
<keyword id="KW-0963">Cytoplasm</keyword>
<keyword id="KW-1185">Reference proteome</keyword>
<keyword id="KW-0690">Ribosome biogenesis</keyword>
<evidence type="ECO:0000255" key="1">
    <source>
        <dbReference type="HAMAP-Rule" id="MF_01077"/>
    </source>
</evidence>
<evidence type="ECO:0000305" key="2"/>
<accession>A8ZZ67</accession>
<reference key="1">
    <citation type="submission" date="2007-10" db="EMBL/GenBank/DDBJ databases">
        <title>Complete sequence of Desulfococcus oleovorans Hxd3.</title>
        <authorList>
            <consortium name="US DOE Joint Genome Institute"/>
            <person name="Copeland A."/>
            <person name="Lucas S."/>
            <person name="Lapidus A."/>
            <person name="Barry K."/>
            <person name="Glavina del Rio T."/>
            <person name="Dalin E."/>
            <person name="Tice H."/>
            <person name="Pitluck S."/>
            <person name="Kiss H."/>
            <person name="Brettin T."/>
            <person name="Bruce D."/>
            <person name="Detter J.C."/>
            <person name="Han C."/>
            <person name="Schmutz J."/>
            <person name="Larimer F."/>
            <person name="Land M."/>
            <person name="Hauser L."/>
            <person name="Kyrpides N."/>
            <person name="Kim E."/>
            <person name="Wawrik B."/>
            <person name="Richardson P."/>
        </authorList>
    </citation>
    <scope>NUCLEOTIDE SEQUENCE [LARGE SCALE GENOMIC DNA]</scope>
    <source>
        <strain>DSM 6200 / JCM 39069 / Hxd3</strain>
    </source>
</reference>
<feature type="chain" id="PRO_0000384641" description="Ribosome maturation factor RimP">
    <location>
        <begin position="1"/>
        <end position="161"/>
    </location>
</feature>
<proteinExistence type="inferred from homology"/>
<name>RIMP_DESOH</name>
<dbReference type="EMBL" id="CP000859">
    <property type="protein sequence ID" value="ABW68840.1"/>
    <property type="status" value="ALT_INIT"/>
    <property type="molecule type" value="Genomic_DNA"/>
</dbReference>
<dbReference type="RefSeq" id="WP_012176451.1">
    <property type="nucleotide sequence ID" value="NC_009943.1"/>
</dbReference>
<dbReference type="SMR" id="A8ZZ67"/>
<dbReference type="STRING" id="96561.Dole_3037"/>
<dbReference type="KEGG" id="dol:Dole_3037"/>
<dbReference type="eggNOG" id="COG0779">
    <property type="taxonomic scope" value="Bacteria"/>
</dbReference>
<dbReference type="HOGENOM" id="CLU_070525_2_2_7"/>
<dbReference type="Proteomes" id="UP000008561">
    <property type="component" value="Chromosome"/>
</dbReference>
<dbReference type="GO" id="GO:0005829">
    <property type="term" value="C:cytosol"/>
    <property type="evidence" value="ECO:0007669"/>
    <property type="project" value="TreeGrafter"/>
</dbReference>
<dbReference type="GO" id="GO:0000028">
    <property type="term" value="P:ribosomal small subunit assembly"/>
    <property type="evidence" value="ECO:0007669"/>
    <property type="project" value="TreeGrafter"/>
</dbReference>
<dbReference type="GO" id="GO:0006412">
    <property type="term" value="P:translation"/>
    <property type="evidence" value="ECO:0007669"/>
    <property type="project" value="TreeGrafter"/>
</dbReference>
<dbReference type="CDD" id="cd01734">
    <property type="entry name" value="YlxS_C"/>
    <property type="match status" value="1"/>
</dbReference>
<dbReference type="Gene3D" id="2.30.30.180">
    <property type="entry name" value="Ribosome maturation factor RimP, C-terminal domain"/>
    <property type="match status" value="1"/>
</dbReference>
<dbReference type="Gene3D" id="3.30.300.70">
    <property type="entry name" value="RimP-like superfamily, N-terminal"/>
    <property type="match status" value="1"/>
</dbReference>
<dbReference type="HAMAP" id="MF_01077">
    <property type="entry name" value="RimP"/>
    <property type="match status" value="1"/>
</dbReference>
<dbReference type="InterPro" id="IPR003728">
    <property type="entry name" value="Ribosome_maturation_RimP"/>
</dbReference>
<dbReference type="InterPro" id="IPR028998">
    <property type="entry name" value="RimP_C"/>
</dbReference>
<dbReference type="InterPro" id="IPR036847">
    <property type="entry name" value="RimP_C_sf"/>
</dbReference>
<dbReference type="InterPro" id="IPR028989">
    <property type="entry name" value="RimP_N"/>
</dbReference>
<dbReference type="InterPro" id="IPR035956">
    <property type="entry name" value="RimP_N_sf"/>
</dbReference>
<dbReference type="PANTHER" id="PTHR33867">
    <property type="entry name" value="RIBOSOME MATURATION FACTOR RIMP"/>
    <property type="match status" value="1"/>
</dbReference>
<dbReference type="PANTHER" id="PTHR33867:SF1">
    <property type="entry name" value="RIBOSOME MATURATION FACTOR RIMP"/>
    <property type="match status" value="1"/>
</dbReference>
<dbReference type="Pfam" id="PF17384">
    <property type="entry name" value="DUF150_C"/>
    <property type="match status" value="1"/>
</dbReference>
<dbReference type="Pfam" id="PF02576">
    <property type="entry name" value="RimP_N"/>
    <property type="match status" value="1"/>
</dbReference>
<dbReference type="SUPFAM" id="SSF74942">
    <property type="entry name" value="YhbC-like, C-terminal domain"/>
    <property type="match status" value="1"/>
</dbReference>
<dbReference type="SUPFAM" id="SSF75420">
    <property type="entry name" value="YhbC-like, N-terminal domain"/>
    <property type="match status" value="1"/>
</dbReference>
<protein>
    <recommendedName>
        <fullName evidence="1">Ribosome maturation factor RimP</fullName>
    </recommendedName>
</protein>
<comment type="function">
    <text evidence="1">Required for maturation of 30S ribosomal subunits.</text>
</comment>
<comment type="subcellular location">
    <subcellularLocation>
        <location evidence="1">Cytoplasm</location>
    </subcellularLocation>
</comment>
<comment type="similarity">
    <text evidence="1">Belongs to the RimP family.</text>
</comment>
<comment type="sequence caution" evidence="2">
    <conflict type="erroneous initiation">
        <sequence resource="EMBL-CDS" id="ABW68840"/>
    </conflict>
</comment>
<gene>
    <name evidence="1" type="primary">rimP</name>
    <name type="ordered locus">Dole_3037</name>
</gene>
<sequence length="161" mass="17593">MGGGNPVVAQMWKLVEPVCSAEGMELVFVEFNKESQGRVLRLYLASGVPDRGVTLEDCAGISRQVNGLLDVYLPELDNYTLEVSSAGLERPLAKEIDFERFAGSRVKIRTAAPVSDRKNFTGILLGVSDGNVRLMVDDKTFVIPYGEITRAKLVNEDGVSQ</sequence>